<evidence type="ECO:0000250" key="1"/>
<evidence type="ECO:0000250" key="2">
    <source>
        <dbReference type="UniProtKB" id="P03315"/>
    </source>
</evidence>
<evidence type="ECO:0000250" key="3">
    <source>
        <dbReference type="UniProtKB" id="P03316"/>
    </source>
</evidence>
<evidence type="ECO:0000250" key="4">
    <source>
        <dbReference type="UniProtKB" id="P08491"/>
    </source>
</evidence>
<evidence type="ECO:0000250" key="5">
    <source>
        <dbReference type="UniProtKB" id="P09592"/>
    </source>
</evidence>
<evidence type="ECO:0000250" key="6">
    <source>
        <dbReference type="UniProtKB" id="P0DOK1"/>
    </source>
</evidence>
<evidence type="ECO:0000250" key="7">
    <source>
        <dbReference type="UniProtKB" id="P27284"/>
    </source>
</evidence>
<evidence type="ECO:0000250" key="8">
    <source>
        <dbReference type="UniProtKB" id="Q5XXP3"/>
    </source>
</evidence>
<evidence type="ECO:0000250" key="9">
    <source>
        <dbReference type="UniProtKB" id="Q5Y388"/>
    </source>
</evidence>
<evidence type="ECO:0000250" key="10">
    <source>
        <dbReference type="UniProtKB" id="Q86925"/>
    </source>
</evidence>
<evidence type="ECO:0000255" key="11"/>
<evidence type="ECO:0000255" key="12">
    <source>
        <dbReference type="PROSITE-ProRule" id="PRU01027"/>
    </source>
</evidence>
<evidence type="ECO:0000256" key="13">
    <source>
        <dbReference type="SAM" id="MobiDB-lite"/>
    </source>
</evidence>
<evidence type="ECO:0000269" key="14">
    <source>
    </source>
</evidence>
<evidence type="ECO:0000269" key="15">
    <source>
    </source>
</evidence>
<evidence type="ECO:0000269" key="16">
    <source>
    </source>
</evidence>
<evidence type="ECO:0000269" key="17">
    <source>
    </source>
</evidence>
<evidence type="ECO:0000269" key="18">
    <source>
    </source>
</evidence>
<evidence type="ECO:0000269" key="19">
    <source>
    </source>
</evidence>
<evidence type="ECO:0000269" key="20">
    <source>
    </source>
</evidence>
<evidence type="ECO:0000269" key="21">
    <source>
    </source>
</evidence>
<evidence type="ECO:0000269" key="22">
    <source>
    </source>
</evidence>
<evidence type="ECO:0000305" key="23"/>
<evidence type="ECO:0000305" key="24">
    <source>
    </source>
</evidence>
<evidence type="ECO:0007744" key="25">
    <source>
        <dbReference type="PDB" id="7CVY"/>
    </source>
</evidence>
<evidence type="ECO:0007744" key="26">
    <source>
        <dbReference type="PDB" id="7CVZ"/>
    </source>
</evidence>
<evidence type="ECO:0007744" key="27">
    <source>
        <dbReference type="PDB" id="7CW0"/>
    </source>
</evidence>
<evidence type="ECO:0007744" key="28">
    <source>
        <dbReference type="PDB" id="7CW2"/>
    </source>
</evidence>
<evidence type="ECO:0007744" key="29">
    <source>
        <dbReference type="PDB" id="7CW3"/>
    </source>
</evidence>
<evidence type="ECO:0007829" key="30">
    <source>
        <dbReference type="PDB" id="2RSW"/>
    </source>
</evidence>
<protein>
    <recommendedName>
        <fullName>Structural polyprotein</fullName>
    </recommendedName>
    <alternativeName>
        <fullName>p130</fullName>
    </alternativeName>
    <component>
        <recommendedName>
            <fullName>Capsid protein</fullName>
            <ecNumber evidence="2">3.4.21.90</ecNumber>
        </recommendedName>
        <alternativeName>
            <fullName>Coat protein</fullName>
            <shortName>C</shortName>
        </alternativeName>
    </component>
    <component>
        <recommendedName>
            <fullName>Precursor of protein E3/E2</fullName>
        </recommendedName>
        <alternativeName>
            <fullName>p62</fullName>
        </alternativeName>
        <alternativeName>
            <fullName>pE2</fullName>
        </alternativeName>
    </component>
    <component>
        <recommendedName>
            <fullName>Assembly protein E3</fullName>
        </recommendedName>
    </component>
    <component>
        <recommendedName>
            <fullName>Spike glycoprotein E2</fullName>
        </recommendedName>
        <alternativeName>
            <fullName>E2 envelope glycoprotein</fullName>
        </alternativeName>
    </component>
    <component>
        <recommendedName>
            <fullName>6K protein</fullName>
        </recommendedName>
    </component>
    <component>
        <recommendedName>
            <fullName>Spike glycoprotein E1</fullName>
        </recommendedName>
        <alternativeName>
            <fullName>E1 envelope glycoprotein</fullName>
        </alternativeName>
    </component>
</protein>
<dbReference type="EC" id="3.4.21.90" evidence="2"/>
<dbReference type="EMBL" id="AF369024">
    <property type="protein sequence ID" value="AAN05102.2"/>
    <property type="molecule type" value="Genomic_RNA"/>
</dbReference>
<dbReference type="EMBL" id="AF339485">
    <property type="protein sequence ID" value="AAO33341.1"/>
    <property type="molecule type" value="Genomic_RNA"/>
</dbReference>
<dbReference type="EMBL" id="AF490259">
    <property type="protein sequence ID" value="AAM10747.2"/>
    <property type="molecule type" value="Genomic_RNA"/>
</dbReference>
<dbReference type="RefSeq" id="NP_690589.2">
    <property type="nucleotide sequence ID" value="NC_004162.2"/>
</dbReference>
<dbReference type="PDB" id="2RSW">
    <property type="method" value="NMR"/>
    <property type="chains" value="A=893-910"/>
</dbReference>
<dbReference type="PDB" id="7CVY">
    <property type="method" value="EM"/>
    <property type="resolution" value="5.20 A"/>
    <property type="chains" value="A/F/K/P=810-1248, B/G/L/Q=330-748, C/H/M/R=111-261"/>
</dbReference>
<dbReference type="PDB" id="7CVZ">
    <property type="method" value="EM"/>
    <property type="resolution" value="4.70 A"/>
    <property type="chains" value="A/D/G/J=810-1248, B/E/H/K=330-748, C/F/I/L=111-261"/>
</dbReference>
<dbReference type="PDB" id="7CW0">
    <property type="method" value="EM"/>
    <property type="resolution" value="5.90 A"/>
    <property type="chains" value="A/D/G/J=810-1248, B/E/H/K=330-748, C/F/I/L=111-261"/>
</dbReference>
<dbReference type="PDB" id="7CW2">
    <property type="method" value="EM"/>
    <property type="resolution" value="4.50 A"/>
    <property type="chains" value="A/D/G/J/M/P/a/d/g/j/m/p/s/v/y=810-1248, B/E/H/K/N/Q/b/e/h/k/n/q/t/w/z=330-748, C/F/I/L/O/R/S/c/f/i/l/o/r/u/x=111-261"/>
</dbReference>
<dbReference type="PDB" id="7CW3">
    <property type="method" value="EM"/>
    <property type="resolution" value="9.40 A"/>
    <property type="chains" value="A/C/E/G/I/K/M/O/Q/S/U/W/Y/a/c/e/g/i=810-1248, B/D/F/H/J/L/N/P/R/T/V/X/Z/b/d/f/h/j=330-748, s/t=111-261"/>
</dbReference>
<dbReference type="PDBsum" id="2RSW"/>
<dbReference type="PDBsum" id="7CVY"/>
<dbReference type="PDBsum" id="7CVZ"/>
<dbReference type="PDBsum" id="7CW0"/>
<dbReference type="PDBsum" id="7CW2"/>
<dbReference type="PDBsum" id="7CW3"/>
<dbReference type="BMRB" id="Q8JUX5"/>
<dbReference type="EMDB" id="EMD-30476"/>
<dbReference type="EMDB" id="EMD-30477"/>
<dbReference type="EMDB" id="EMD-30478"/>
<dbReference type="EMDB" id="EMD-30479"/>
<dbReference type="EMDB" id="EMD-30480"/>
<dbReference type="SMR" id="Q8JUX5"/>
<dbReference type="BindingDB" id="Q8JUX5"/>
<dbReference type="MEROPS" id="S03.001"/>
<dbReference type="ABCD" id="Q8JUX5">
    <property type="antibodies" value="18 sequenced antibodies"/>
</dbReference>
<dbReference type="GeneID" id="956308"/>
<dbReference type="KEGG" id="vg:956308"/>
<dbReference type="SABIO-RK" id="Q8JUX5"/>
<dbReference type="EvolutionaryTrace" id="Q8JUX5"/>
<dbReference type="Proteomes" id="UP000000569">
    <property type="component" value="Segment"/>
</dbReference>
<dbReference type="Proteomes" id="UP000126290">
    <property type="component" value="Genome"/>
</dbReference>
<dbReference type="GO" id="GO:0030430">
    <property type="term" value="C:host cell cytoplasm"/>
    <property type="evidence" value="ECO:0007669"/>
    <property type="project" value="UniProtKB-SubCell"/>
</dbReference>
<dbReference type="GO" id="GO:0042025">
    <property type="term" value="C:host cell nucleus"/>
    <property type="evidence" value="ECO:0007669"/>
    <property type="project" value="UniProtKB-SubCell"/>
</dbReference>
<dbReference type="GO" id="GO:0020002">
    <property type="term" value="C:host cell plasma membrane"/>
    <property type="evidence" value="ECO:0007669"/>
    <property type="project" value="UniProtKB-SubCell"/>
</dbReference>
<dbReference type="GO" id="GO:0016020">
    <property type="term" value="C:membrane"/>
    <property type="evidence" value="ECO:0007669"/>
    <property type="project" value="UniProtKB-KW"/>
</dbReference>
<dbReference type="GO" id="GO:0039619">
    <property type="term" value="C:T=4 icosahedral viral capsid"/>
    <property type="evidence" value="ECO:0007669"/>
    <property type="project" value="UniProtKB-KW"/>
</dbReference>
<dbReference type="GO" id="GO:0055036">
    <property type="term" value="C:virion membrane"/>
    <property type="evidence" value="ECO:0007669"/>
    <property type="project" value="UniProtKB-SubCell"/>
</dbReference>
<dbReference type="GO" id="GO:0003723">
    <property type="term" value="F:RNA binding"/>
    <property type="evidence" value="ECO:0007669"/>
    <property type="project" value="UniProtKB-KW"/>
</dbReference>
<dbReference type="GO" id="GO:0004252">
    <property type="term" value="F:serine-type endopeptidase activity"/>
    <property type="evidence" value="ECO:0007669"/>
    <property type="project" value="InterPro"/>
</dbReference>
<dbReference type="GO" id="GO:0005198">
    <property type="term" value="F:structural molecule activity"/>
    <property type="evidence" value="ECO:0007669"/>
    <property type="project" value="InterPro"/>
</dbReference>
<dbReference type="GO" id="GO:0039654">
    <property type="term" value="P:fusion of virus membrane with host endosome membrane"/>
    <property type="evidence" value="ECO:0007669"/>
    <property type="project" value="UniProtKB-KW"/>
</dbReference>
<dbReference type="GO" id="GO:0006508">
    <property type="term" value="P:proteolysis"/>
    <property type="evidence" value="ECO:0007669"/>
    <property type="project" value="UniProtKB-KW"/>
</dbReference>
<dbReference type="GO" id="GO:0046718">
    <property type="term" value="P:symbiont entry into host cell"/>
    <property type="evidence" value="ECO:0007669"/>
    <property type="project" value="UniProtKB-KW"/>
</dbReference>
<dbReference type="GO" id="GO:0039722">
    <property type="term" value="P:symbiont-mediated suppression of host toll-like receptor signaling pathway"/>
    <property type="evidence" value="ECO:0000250"/>
    <property type="project" value="UniProtKB"/>
</dbReference>
<dbReference type="GO" id="GO:0075523">
    <property type="term" value="P:viral translational frameshifting"/>
    <property type="evidence" value="ECO:0007669"/>
    <property type="project" value="UniProtKB-KW"/>
</dbReference>
<dbReference type="GO" id="GO:0019062">
    <property type="term" value="P:virion attachment to host cell"/>
    <property type="evidence" value="ECO:0007669"/>
    <property type="project" value="UniProtKB-KW"/>
</dbReference>
<dbReference type="FunFam" id="1.10.287.2230:FF:000001">
    <property type="entry name" value="Structural polyprotein"/>
    <property type="match status" value="1"/>
</dbReference>
<dbReference type="FunFam" id="2.40.10.10:FF:000075">
    <property type="entry name" value="Structural polyprotein"/>
    <property type="match status" value="1"/>
</dbReference>
<dbReference type="FunFam" id="2.40.10.10:FF:000076">
    <property type="entry name" value="Structural polyprotein"/>
    <property type="match status" value="1"/>
</dbReference>
<dbReference type="FunFam" id="2.60.40.2400:FF:000001">
    <property type="entry name" value="Structural polyprotein"/>
    <property type="match status" value="1"/>
</dbReference>
<dbReference type="FunFam" id="2.60.40.350:FF:000002">
    <property type="entry name" value="Structural polyprotein"/>
    <property type="match status" value="1"/>
</dbReference>
<dbReference type="FunFam" id="2.60.40.4310:FF:000001">
    <property type="entry name" value="Structural polyprotein"/>
    <property type="match status" value="1"/>
</dbReference>
<dbReference type="FunFam" id="2.60.98.10:FF:000002">
    <property type="entry name" value="Structural polyprotein"/>
    <property type="match status" value="1"/>
</dbReference>
<dbReference type="FunFam" id="2.60.98.10:FF:000003">
    <property type="entry name" value="Structural polyprotein"/>
    <property type="match status" value="1"/>
</dbReference>
<dbReference type="FunFam" id="2.60.98.10:FF:000004">
    <property type="entry name" value="Structural polyprotein"/>
    <property type="match status" value="1"/>
</dbReference>
<dbReference type="Gene3D" id="1.10.287.2230">
    <property type="match status" value="1"/>
</dbReference>
<dbReference type="Gene3D" id="2.60.40.350">
    <property type="match status" value="1"/>
</dbReference>
<dbReference type="Gene3D" id="2.60.40.3200">
    <property type="entry name" value="Alphavirus E2 glycoprotein, A domain"/>
    <property type="match status" value="1"/>
</dbReference>
<dbReference type="Gene3D" id="2.60.40.4310">
    <property type="entry name" value="Alphavirus E2 glycoprotein, domain B"/>
    <property type="match status" value="1"/>
</dbReference>
<dbReference type="Gene3D" id="2.60.40.2400">
    <property type="entry name" value="Alphavirus E2 glycoprotein, domain C"/>
    <property type="match status" value="1"/>
</dbReference>
<dbReference type="Gene3D" id="2.60.98.10">
    <property type="entry name" value="Tick-borne Encephalitis virus Glycoprotein, domain 1"/>
    <property type="match status" value="3"/>
</dbReference>
<dbReference type="Gene3D" id="2.40.10.10">
    <property type="entry name" value="Trypsin-like serine proteases"/>
    <property type="match status" value="2"/>
</dbReference>
<dbReference type="InterPro" id="IPR002548">
    <property type="entry name" value="Alpha_E1_glycop"/>
</dbReference>
<dbReference type="InterPro" id="IPR000936">
    <property type="entry name" value="Alpha_E2_glycop"/>
</dbReference>
<dbReference type="InterPro" id="IPR002533">
    <property type="entry name" value="Alpha_E3_glycop"/>
</dbReference>
<dbReference type="InterPro" id="IPR042304">
    <property type="entry name" value="Alphavir_E2_A"/>
</dbReference>
<dbReference type="InterPro" id="IPR042305">
    <property type="entry name" value="Alphavir_E2_B"/>
</dbReference>
<dbReference type="InterPro" id="IPR042306">
    <property type="entry name" value="Alphavir_E2_C"/>
</dbReference>
<dbReference type="InterPro" id="IPR000336">
    <property type="entry name" value="Flavivir/Alphavir_Ig-like_sf"/>
</dbReference>
<dbReference type="InterPro" id="IPR036253">
    <property type="entry name" value="Glycoprot_cen/dimer_sf"/>
</dbReference>
<dbReference type="InterPro" id="IPR038055">
    <property type="entry name" value="Glycoprot_E_dimer_dom"/>
</dbReference>
<dbReference type="InterPro" id="IPR014756">
    <property type="entry name" value="Ig_E-set"/>
</dbReference>
<dbReference type="InterPro" id="IPR009003">
    <property type="entry name" value="Peptidase_S1_PA"/>
</dbReference>
<dbReference type="InterPro" id="IPR043504">
    <property type="entry name" value="Peptidase_S1_PA_chymotrypsin"/>
</dbReference>
<dbReference type="InterPro" id="IPR000930">
    <property type="entry name" value="Peptidase_S3"/>
</dbReference>
<dbReference type="Pfam" id="PF01589">
    <property type="entry name" value="Alpha_E1_glycop"/>
    <property type="match status" value="1"/>
</dbReference>
<dbReference type="Pfam" id="PF00943">
    <property type="entry name" value="Alpha_E2_glycop"/>
    <property type="match status" value="1"/>
</dbReference>
<dbReference type="Pfam" id="PF01563">
    <property type="entry name" value="Alpha_E3_glycop"/>
    <property type="match status" value="1"/>
</dbReference>
<dbReference type="Pfam" id="PF00944">
    <property type="entry name" value="Peptidase_S3"/>
    <property type="match status" value="1"/>
</dbReference>
<dbReference type="PRINTS" id="PR00798">
    <property type="entry name" value="TOGAVIRIN"/>
</dbReference>
<dbReference type="SUPFAM" id="SSF81296">
    <property type="entry name" value="E set domains"/>
    <property type="match status" value="1"/>
</dbReference>
<dbReference type="SUPFAM" id="SSF50494">
    <property type="entry name" value="Trypsin-like serine proteases"/>
    <property type="match status" value="1"/>
</dbReference>
<dbReference type="SUPFAM" id="SSF56983">
    <property type="entry name" value="Viral glycoprotein, central and dimerisation domains"/>
    <property type="match status" value="1"/>
</dbReference>
<dbReference type="PROSITE" id="PS51690">
    <property type="entry name" value="ALPHAVIRUS_CP"/>
    <property type="match status" value="1"/>
</dbReference>
<feature type="chain" id="PRO_0000226219" description="Capsid protein" evidence="1">
    <location>
        <begin position="1"/>
        <end position="261"/>
    </location>
</feature>
<feature type="chain" id="PRO_0000226220" description="Precursor of protein E3/E2" evidence="1">
    <location>
        <begin position="262"/>
        <end position="748"/>
    </location>
</feature>
<feature type="chain" id="PRO_0000226221" description="Assembly protein E3" evidence="1">
    <location>
        <begin position="262"/>
        <end position="325"/>
    </location>
</feature>
<feature type="chain" id="PRO_0000226222" description="Spike glycoprotein E2" evidence="1">
    <location>
        <begin position="326"/>
        <end position="748"/>
    </location>
</feature>
<feature type="chain" id="PRO_0000226223" description="6K protein" evidence="1">
    <location>
        <begin position="749"/>
        <end position="809"/>
    </location>
</feature>
<feature type="chain" id="PRO_0000226224" description="Spike glycoprotein E1" evidence="1">
    <location>
        <begin position="810"/>
        <end position="1248"/>
    </location>
</feature>
<feature type="topological domain" description="Extracellular" evidence="11">
    <location>
        <begin position="262"/>
        <end position="692"/>
    </location>
</feature>
<feature type="transmembrane region" description="Helical" evidence="11">
    <location>
        <begin position="693"/>
        <end position="713"/>
    </location>
</feature>
<feature type="topological domain" description="Cytoplasmic" evidence="11">
    <location>
        <begin position="714"/>
        <end position="748"/>
    </location>
</feature>
<feature type="topological domain" description="Extracellular" evidence="11">
    <location>
        <begin position="749"/>
        <end position="763"/>
    </location>
</feature>
<feature type="transmembrane region" description="Helical" evidence="11">
    <location>
        <begin position="764"/>
        <end position="784"/>
    </location>
</feature>
<feature type="topological domain" description="Cytoplasmic" evidence="11">
    <location>
        <begin position="785"/>
        <end position="795"/>
    </location>
</feature>
<feature type="transmembrane region" description="Helical" evidence="11">
    <location>
        <begin position="796"/>
        <end position="816"/>
    </location>
</feature>
<feature type="topological domain" description="Extracellular" evidence="11">
    <location>
        <begin position="817"/>
        <end position="1224"/>
    </location>
</feature>
<feature type="transmembrane region" description="Helical" evidence="11">
    <location>
        <begin position="1225"/>
        <end position="1245"/>
    </location>
</feature>
<feature type="topological domain" description="Cytoplasmic" evidence="11">
    <location>
        <begin position="1246"/>
        <end position="1248"/>
    </location>
</feature>
<feature type="domain" description="Peptidase S3" evidence="12">
    <location>
        <begin position="113"/>
        <end position="261"/>
    </location>
</feature>
<feature type="region of interest" description="Disordered" evidence="13">
    <location>
        <begin position="1"/>
        <end position="104"/>
    </location>
</feature>
<feature type="region of interest" description="Host transcription inhibition" evidence="5">
    <location>
        <begin position="36"/>
        <end position="68"/>
    </location>
</feature>
<feature type="region of interest" description="Binding to the viral RNA" evidence="7">
    <location>
        <begin position="84"/>
        <end position="114"/>
    </location>
</feature>
<feature type="region of interest" description="Ribosome-binding" evidence="7">
    <location>
        <begin position="99"/>
        <end position="113"/>
    </location>
</feature>
<feature type="region of interest" description="Interaction with spike glycoprotein E2" evidence="3">
    <location>
        <begin position="155"/>
        <end position="160"/>
    </location>
</feature>
<feature type="region of interest" description="Dimerization of the capsid protein" evidence="6">
    <location>
        <begin position="183"/>
        <end position="193"/>
    </location>
</feature>
<feature type="region of interest" description="Dimerization of the capsid protein" evidence="6">
    <location>
        <begin position="219"/>
        <end position="223"/>
    </location>
</feature>
<feature type="region of interest" description="Functions as an uncleaved signal peptide for the precursor of protein E3/E2" evidence="2">
    <location>
        <begin position="262"/>
        <end position="274"/>
    </location>
</feature>
<feature type="region of interest" description="Interaction with host Mxra8 receptor" evidence="4">
    <location>
        <begin position="351"/>
        <end position="354"/>
    </location>
</feature>
<feature type="region of interest" description="Interaction with host Mxra8 receptor" evidence="4">
    <location>
        <begin position="387"/>
        <end position="389"/>
    </location>
</feature>
<feature type="region of interest" description="Interaction with host Mxra8 receptor" evidence="4">
    <location>
        <begin position="509"/>
        <end position="512"/>
    </location>
</feature>
<feature type="region of interest" description="Interaction with host Mxra8 receptor" evidence="4">
    <location>
        <begin position="541"/>
        <end position="547"/>
    </location>
</feature>
<feature type="region of interest" description="Interaction with the capsid protein" evidence="3">
    <location>
        <begin position="716"/>
        <end position="720"/>
    </location>
</feature>
<feature type="region of interest" description="Transient transmembrane before p62-6K protein processing" evidence="11">
    <location>
        <begin position="721"/>
        <end position="741"/>
    </location>
</feature>
<feature type="region of interest" description="E1 fusion peptide loop" evidence="15">
    <location>
        <begin position="893"/>
        <end position="910"/>
    </location>
</feature>
<feature type="short sequence motif" description="Nuclear localization signal" evidence="5">
    <location>
        <begin position="61"/>
        <end position="99"/>
    </location>
</feature>
<feature type="short sequence motif" description="Nuclear export signal" evidence="5">
    <location>
        <begin position="144"/>
        <end position="154"/>
    </location>
</feature>
<feature type="compositionally biased region" description="Polar residues" evidence="13">
    <location>
        <begin position="1"/>
        <end position="10"/>
    </location>
</feature>
<feature type="compositionally biased region" description="Low complexity" evidence="13">
    <location>
        <begin position="22"/>
        <end position="44"/>
    </location>
</feature>
<feature type="compositionally biased region" description="Basic residues" evidence="13">
    <location>
        <begin position="60"/>
        <end position="72"/>
    </location>
</feature>
<feature type="compositionally biased region" description="Low complexity" evidence="13">
    <location>
        <begin position="73"/>
        <end position="85"/>
    </location>
</feature>
<feature type="compositionally biased region" description="Basic residues" evidence="13">
    <location>
        <begin position="86"/>
        <end position="101"/>
    </location>
</feature>
<feature type="active site" description="Charge relay system" evidence="12">
    <location>
        <position position="139"/>
    </location>
</feature>
<feature type="active site" description="Charge relay system" evidence="12">
    <location>
        <position position="161"/>
    </location>
</feature>
<feature type="active site" description="Charge relay system" evidence="12">
    <location>
        <position position="213"/>
    </location>
</feature>
<feature type="site" description="Involved in dimerization of the capsid protein" evidence="10">
    <location>
        <position position="187"/>
    </location>
</feature>
<feature type="site" description="Involved in dimerization of the capsid protein" evidence="10">
    <location>
        <position position="220"/>
    </location>
</feature>
<feature type="site" description="Cleavage; by autolysis" evidence="2">
    <location>
        <begin position="261"/>
        <end position="262"/>
    </location>
</feature>
<feature type="site" description="Cleavage; by host furin" evidence="2">
    <location>
        <begin position="325"/>
        <end position="326"/>
    </location>
</feature>
<feature type="site" description="Cleavage; by host signal peptidase" evidence="2">
    <location>
        <begin position="748"/>
        <end position="749"/>
    </location>
</feature>
<feature type="site" description="Cleavage; by host signal peptidase" evidence="2">
    <location>
        <begin position="809"/>
        <end position="810"/>
    </location>
</feature>
<feature type="lipid moiety-binding region" description="S-palmitoyl cysteine; by host" evidence="3">
    <location>
        <position position="721"/>
    </location>
</feature>
<feature type="lipid moiety-binding region" description="S-palmitoyl cysteine; by host" evidence="9">
    <location>
        <position position="741"/>
    </location>
</feature>
<feature type="lipid moiety-binding region" description="S-palmitoyl cysteine; by host" evidence="9">
    <location>
        <position position="742"/>
    </location>
</feature>
<feature type="lipid moiety-binding region" description="S-palmitoyl cysteine; by host" evidence="9">
    <location>
        <position position="1242"/>
    </location>
</feature>
<feature type="lipid moiety-binding region" description="S-stearoyl cysteine; by host" evidence="1">
    <location>
        <position position="1242"/>
    </location>
</feature>
<feature type="glycosylation site" description="N-linked (GlcNAc...) asparagine; by host" evidence="11">
    <location>
        <position position="273"/>
    </location>
</feature>
<feature type="glycosylation site" description="N-linked (GlcNAc...) asparagine; by host" evidence="9">
    <location>
        <position position="588"/>
    </location>
</feature>
<feature type="glycosylation site" description="N-linked (GlcNAc...) asparagine; by host" evidence="11">
    <location>
        <position position="670"/>
    </location>
</feature>
<feature type="glycosylation site" description="N-linked (GlcNAc...) asparagine; by host" evidence="9">
    <location>
        <position position="950"/>
    </location>
</feature>
<feature type="glycosylation site" description="N-linked (GlcNAc...) asparagine; by host" evidence="9">
    <location>
        <position position="1079"/>
    </location>
</feature>
<feature type="disulfide bond" evidence="2">
    <location>
        <begin position="113"/>
        <end position="128"/>
    </location>
</feature>
<feature type="disulfide bond" evidence="8">
    <location>
        <begin position="269"/>
        <end position="278"/>
    </location>
</feature>
<feature type="disulfide bond" evidence="8">
    <location>
        <begin position="283"/>
        <end position="287"/>
    </location>
</feature>
<feature type="disulfide bond" evidence="8">
    <location>
        <begin position="286"/>
        <end position="318"/>
    </location>
</feature>
<feature type="disulfide bond" evidence="8">
    <location>
        <begin position="344"/>
        <end position="450"/>
    </location>
</feature>
<feature type="disulfide bond" evidence="8">
    <location>
        <begin position="347"/>
        <end position="353"/>
    </location>
</feature>
<feature type="disulfide bond" evidence="8">
    <location>
        <begin position="416"/>
        <end position="430"/>
    </location>
</feature>
<feature type="disulfide bond" evidence="8">
    <location>
        <begin position="478"/>
        <end position="591"/>
    </location>
</feature>
<feature type="disulfide bond" evidence="8">
    <location>
        <begin position="526"/>
        <end position="550"/>
    </location>
</feature>
<feature type="disulfide bond" evidence="8">
    <location>
        <begin position="528"/>
        <end position="545"/>
    </location>
</feature>
<feature type="disulfide bond" evidence="8">
    <location>
        <begin position="721"/>
        <end position="742"/>
    </location>
</feature>
<feature type="disulfide bond" evidence="8">
    <location>
        <begin position="858"/>
        <end position="923"/>
    </location>
</feature>
<feature type="disulfide bond" evidence="8">
    <location>
        <begin position="871"/>
        <end position="903"/>
    </location>
</feature>
<feature type="disulfide bond" evidence="8">
    <location>
        <begin position="872"/>
        <end position="905"/>
    </location>
</feature>
<feature type="disulfide bond" evidence="8">
    <location>
        <begin position="877"/>
        <end position="887"/>
    </location>
</feature>
<feature type="disulfide bond" evidence="8">
    <location>
        <begin position="1068"/>
        <end position="1080"/>
    </location>
</feature>
<feature type="disulfide bond" evidence="8">
    <location>
        <begin position="1110"/>
        <end position="1185"/>
    </location>
</feature>
<feature type="disulfide bond" evidence="8">
    <location>
        <begin position="1115"/>
        <end position="1189"/>
    </location>
</feature>
<feature type="disulfide bond" evidence="8">
    <location>
        <begin position="1137"/>
        <end position="1179"/>
    </location>
</feature>
<feature type="mutagenesis site" description="Complete loss of nuclear expot of the capsid protein; when associated with A-53." evidence="17">
    <original>L</original>
    <variation>A</variation>
    <location>
        <position position="51"/>
    </location>
</feature>
<feature type="mutagenesis site" description="Complete loss of nuclear expot of the capsid protein; when associated with A-51." evidence="17">
    <original>M</original>
    <variation>A</variation>
    <location>
        <position position="53"/>
    </location>
</feature>
<feature type="sequence conflict" description="In Ref. 1; AAN05102." evidence="23" ref="1">
    <original>R</original>
    <variation>K</variation>
    <location>
        <position position="63"/>
    </location>
</feature>
<feature type="sequence conflict" description="In Ref. 1; AAN05102." evidence="23" ref="1">
    <original>GR</original>
    <variation>SQ</variation>
    <location>
        <begin position="519"/>
        <end position="520"/>
    </location>
</feature>
<feature type="helix" evidence="30">
    <location>
        <begin position="895"/>
        <end position="899"/>
    </location>
</feature>
<feature type="turn" evidence="30">
    <location>
        <begin position="904"/>
        <end position="907"/>
    </location>
</feature>
<sequence>MEFIPTQTFYNRRYQPRPWTPRPTIQVIRPRPRPQRQAGQLAQLISAVNKLTMRAVPQQKPRRNRKNKKQKQKQQAPQNNTNQKKQPPKKKPAQKKKKPGRRERMCMKIENDCIFEVKHEGKVTGYACLVGDKVMKPAHVKGTIDNADLAKLAFKRSSKYDLECAQIPVHMKSDASKFTHEKPEGYYNWHHGAVQYSGGRFTIPTGAGKPGDSGRPIFDNKGRVVAIVLGGANEGARTALSVVTWNKDIVTKITPEGAEEWSLAIPVMCLLANTTFPCSQPPCIPCCYEKEPEETLRMLEDNVMRPGYYQLLQASLTCSPHRQRRSTKDNFNVYKATRPYLAHCPDCGEGHSCHSPVALERIRNEATDGTLKIQVSLQIGIGTDDSHDWTKLRYMDNHIPADAGRAGLFVRTSAPCTITGTMGHFILARCPKGETLTVGFTDSRKISHSCTHPFHHDPPVIGREKFHSRPQHGKELPCSTYVQSNAATAEEIEVHMPPDTPDRTLLSQQSGNVKITVNGRTVRYKCNCGGSNEGLITTDKVINNCKVDQCHAAVTNHKKWQYNSPLVPRNAELGDRKGKIHIPFPLANVTCMVPKARNPTVTYGKNQVIMLLYPDHPTLLSYRSMGEEPNYQEEWVTHKKEVVLTVPTEGLEVTWGNNEPYKYWPQLSANGTAHGHPHEIILYYYELYPTMTVVVVSVASFILLSMVGMAVGMCMCARRRCITPYELTPGATVPFLLSLICCIRTAKAATYQEAAVYLWNEQQPLFWLQALIPLAALIVLCNCLRLLPCCCKTLAFLAVMSIGAHTVSAYEHVTVIPNTVGVPYKTLVNRPGYSPMVLEMELLSVTLEPTLSLDYITCEYKTVIPSPYVKCCGTAECKDKNLPDYSCKVFTGVYPFMWGGAYCFCDAENTQLSEAHVEKSESCKTEFASAYRAHTASASAKLRVLYQGNNITVTAYANGDHAVTVKDAKFIVGPMSSAWTPFDNKIVVYKGDVYNMDYPPFGAGRPGQFGDIQSRTPESKDVYANTQLVLQRPAAGTVHVPYSQAPSGFKYWLKERGASLQHTAPFGCQIATNPVRAMNCAVGNMPISIDIPDAAFTRVVDAPSLTDMSCEVPACTHSSDFGGVAIIKYAVSKKGKCAVHSMTNAVTIREAEIEVEGNSQLQISFSTALASAEFRVQVCSTQVHCAAECHPPKDHIVNYPASHTTLGVQDISATAMSWVQKITGGVGLVVAVAALILIVVLCVSFSRH</sequence>
<keyword id="KW-0002">3D-structure</keyword>
<keyword id="KW-0167">Capsid protein</keyword>
<keyword id="KW-0165">Cleavage on pair of basic residues</keyword>
<keyword id="KW-1015">Disulfide bond</keyword>
<keyword id="KW-1170">Fusion of virus membrane with host endosomal membrane</keyword>
<keyword id="KW-1168">Fusion of virus membrane with host membrane</keyword>
<keyword id="KW-0325">Glycoprotein</keyword>
<keyword id="KW-1032">Host cell membrane</keyword>
<keyword id="KW-1035">Host cytoplasm</keyword>
<keyword id="KW-1038">Host endoplasmic reticulum</keyword>
<keyword id="KW-1040">Host Golgi apparatus</keyword>
<keyword id="KW-1043">Host membrane</keyword>
<keyword id="KW-1048">Host nucleus</keyword>
<keyword id="KW-0945">Host-virus interaction</keyword>
<keyword id="KW-0378">Hydrolase</keyword>
<keyword id="KW-0407">Ion channel</keyword>
<keyword id="KW-0406">Ion transport</keyword>
<keyword id="KW-0449">Lipoprotein</keyword>
<keyword id="KW-0472">Membrane</keyword>
<keyword id="KW-0564">Palmitate</keyword>
<keyword id="KW-0645">Protease</keyword>
<keyword id="KW-1185">Reference proteome</keyword>
<keyword id="KW-0688">Ribosomal frameshifting</keyword>
<keyword id="KW-0694">RNA-binding</keyword>
<keyword id="KW-0720">Serine protease</keyword>
<keyword id="KW-1144">T=4 icosahedral capsid protein</keyword>
<keyword id="KW-0812">Transmembrane</keyword>
<keyword id="KW-1133">Transmembrane helix</keyword>
<keyword id="KW-0813">Transport</keyword>
<keyword id="KW-1161">Viral attachment to host cell</keyword>
<keyword id="KW-1234">Viral attachment to host entry receptor</keyword>
<keyword id="KW-1182">Viral ion channel</keyword>
<keyword id="KW-1162">Viral penetration into host cytoplasm</keyword>
<keyword id="KW-0946">Virion</keyword>
<keyword id="KW-1160">Virus entry into host cell</keyword>
<organism>
    <name type="scientific">Chikungunya virus (strain S27-African prototype)</name>
    <name type="common">CHIKV</name>
    <dbReference type="NCBI Taxonomy" id="371094"/>
    <lineage>
        <taxon>Viruses</taxon>
        <taxon>Riboviria</taxon>
        <taxon>Orthornavirae</taxon>
        <taxon>Kitrinoviricota</taxon>
        <taxon>Alsuviricetes</taxon>
        <taxon>Martellivirales</taxon>
        <taxon>Togaviridae</taxon>
        <taxon>Alphavirus</taxon>
        <taxon>Chikungunya virus</taxon>
    </lineage>
</organism>
<organismHost>
    <name type="scientific">Aedes aegypti</name>
    <name type="common">Yellowfever mosquito</name>
    <name type="synonym">Culex aegypti</name>
    <dbReference type="NCBI Taxonomy" id="7159"/>
</organismHost>
<organismHost>
    <name type="scientific">Aedes albopictus</name>
    <name type="common">Asian tiger mosquito</name>
    <name type="synonym">Stegomyia albopicta</name>
    <dbReference type="NCBI Taxonomy" id="7160"/>
</organismHost>
<organismHost>
    <name type="scientific">Aedes furcifer</name>
    <name type="common">Mosquito</name>
    <dbReference type="NCBI Taxonomy" id="299627"/>
</organismHost>
<organismHost>
    <name type="scientific">Aedes polynesiensis</name>
    <name type="common">Polynesian tiger mosquito</name>
    <dbReference type="NCBI Taxonomy" id="188700"/>
</organismHost>
<organismHost>
    <name type="scientific">Cercopithecus</name>
    <dbReference type="NCBI Taxonomy" id="9533"/>
</organismHost>
<organismHost>
    <name type="scientific">Homo sapiens</name>
    <name type="common">Human</name>
    <dbReference type="NCBI Taxonomy" id="9606"/>
</organismHost>
<organismHost>
    <name type="scientific">Macaca</name>
    <name type="common">macaques</name>
    <dbReference type="NCBI Taxonomy" id="9539"/>
</organismHost>
<organismHost>
    <name type="scientific">Pan troglodytes</name>
    <name type="common">Chimpanzee</name>
    <dbReference type="NCBI Taxonomy" id="9598"/>
</organismHost>
<organismHost>
    <name type="scientific">Papio</name>
    <name type="common">baboons</name>
    <dbReference type="NCBI Taxonomy" id="9554"/>
</organismHost>
<organismHost>
    <name type="scientific">Presbytis</name>
    <dbReference type="NCBI Taxonomy" id="9573"/>
</organismHost>
<comment type="function">
    <molecule>Capsid protein</molecule>
    <text evidence="2 3 7 19">Forms an icosahedral capsid with a T=4 symmetry composed of 240 copies of the capsid protein surrounded by a lipid membrane through which penetrate 80 spikes composed of trimers of E1-E2 heterodimers (By similarity). The capsid protein binds to the viral RNA genome at a site adjacent to a ribosome binding site for viral genome translation following genome release (By similarity). Possesses a protease activity that results in its autocatalytic cleavage from the nascent structural protein (By similarity). Following its self-cleavage, the capsid protein transiently associates with ribosomes, and within several minutes the protein binds to viral RNA and rapidly assembles into icosahedric core particles (By similarity). The resulting nucleocapsid eventually associates with the cytoplasmic domain of the spike glycoprotein E2 at the cell membrane, leading to budding and formation of mature virions (By similarity). In case of infection, new virions attach to target cells and after clathrin-mediated endocytosis their membrane fuses with the host endosomal membrane (By similarity). This leads to the release of the nucleocapsid into the cytoplasm, followed by an uncoating event necessary for the genomic RNA to become accessible (By similarity). The uncoating might be triggered by the interaction of capsid proteins with ribosomes (By similarity). Binding of ribosomes would release the genomic RNA since the same region is genomic RNA-binding and ribosome-binding (By similarity). Specifically inhibits interleukin-1 receptor-associated kinase 1/IRAK1-dependent signaling during viral entry, representing a means by which the alphaviruses may evade innate immune detection and activation prior to viral gene expression (By similarity). Degrades host cyclic GMP-AMP synthase (CGAS) thereby inhibiting the cGAS-STING pathway (PubMed:33057424).</text>
</comment>
<comment type="function">
    <molecule>Assembly protein E3</molecule>
    <text evidence="2">Provides the signal sequence for the translocation of the precursor of protein E3/E2 to the host endoplasmic reticulum. Furin-cleaved E3 remains associated with spike glycoprotein E1 and mediates pH protection of the latter during the transport via the secretory pathway. After virion release from the host cell, the assembly protein E3 is gradually released in the extracellular space.</text>
</comment>
<comment type="function">
    <molecule>Spike glycoprotein E2</molecule>
    <text evidence="2 18">Plays a role in viral attachment to target host cell, by binding to the cell receptor MXRA8 (PubMed:29769725). Synthesized as a p62 precursor which is processed by furin at the cell membrane just before virion budding, giving rise to E2-E1 heterodimer. The p62-E1 heterodimer is stable, whereas E2-E1 is unstable and dissociate at low pH. p62 is processed at the last step, presumably to avoid E1 fusion activation before its final export to cell surface. E2 C-terminus contains a transitory transmembrane that would be disrupted by palmitoylation, resulting in reorientation of the C-terminal tail from lumenal to cytoplasmic side. This step is critical since E2 C-terminus is involved in budding by interacting with capsid proteins. This release of E2 C-terminus in cytoplasm occurs lately in protein export, and precludes premature assembly of particles at the endoplasmic reticulum membrane (By similarity).</text>
</comment>
<comment type="function">
    <molecule>6K protein</molecule>
    <text evidence="2 3">Acts as a viroporin that participates in virus glycoprotein processing and transport to the plasma membrane, cell permeabilization and budding of viral particles (By similarity). Disrupts the calcium homeostasis of the cell, probably at the endoplasmic reticulum level (By similarity). This leads to cytoplasmic calcium elevation (By similarity). Because of its lipophilic properties, the 6K protein is postulated to influence the selection of lipids that interact with the transmembrane domains of the glycoproteins, which, in turn, affects the deformability of the bilayer required for the extreme curvature that occurs as budding proceeds. Present in low amount in virions, about 3% compared to viral glycoproteins (By similarity).</text>
</comment>
<comment type="function">
    <molecule>Spike glycoprotein E1</molecule>
    <text evidence="3 21 24">Class II viral fusion protein (PubMed:35970990). Fusion activity is inactive as long as E1 is bound to E2 in mature virion (PubMed:35970990). After virus attachment to target cell and endocytosis, acidification of the endosome induce dissociation of E1/E2 heterodimer and concomitant trimerization of the E1 subunits (PubMed:35970990). This E1 trimer is fusion active, and promotes release of viral nucleocapsid in cytoplasm after endosome and viral membrane fusion (Probable) (PubMed:35970990). Efficient fusion requires the presence of cholesterol and sphingolipid in the target membrane (By similarity).</text>
</comment>
<comment type="catalytic activity">
    <reaction evidence="3">
        <text>Autocatalytic release of the core protein from the N-terminus of the togavirus structural polyprotein by hydrolysis of a -Trp-|-Ser- bond.</text>
        <dbReference type="EC" id="3.4.21.90"/>
    </reaction>
</comment>
<comment type="subunit">
    <molecule>Capsid protein</molecule>
    <text evidence="3 10 16">Homodimer (By similarity). Homomultimer (By similarity). Interacts with host karyopherin KPNA4; this interaction allows the nuclear import of the viral capsid protein (PubMed:23984714). Interacts with spike glycoprotein E2 (By similarity). Interacts with host IRAK1; the interaction leads to inhibition of IRAK1-dependent signaling (By similarity).</text>
</comment>
<comment type="subunit">
    <molecule>Precursor of protein E3/E2</molecule>
    <text evidence="2 3 6">The precursor of protein E3/E2 and E1 form a heterodimer shortly after synthesis (By similarity).</text>
</comment>
<comment type="subunit">
    <molecule>Spike glycoprotein E1</molecule>
    <text evidence="3 8 20 21">Interacts with spike glycoprotein E2 (PubMed:33087569). The precursor of protein E3/E2 and E1 form a heterodimer shortly after synthesis (By similarity). Processing of the precursor of protein E3/E2 into E2 and E3 results in a heterodimer of the spike glycoproteins E2 and E1 (By similarity). Spike at virion surface are constituted of three E2-E1 heterodimers (By similarity). After target cell attachment and endocytosis, E1 changes conformation to form homotrimers (PubMed:35970990). Interacts with 6K protein (By similarity). Interacts with host MXRA8; this interaction mediates virus entry (By similarity). The interaction involves 2 adjacent E2-E1 heterodimers (By similarity).</text>
</comment>
<comment type="subunit">
    <molecule>Spike glycoprotein E2</molecule>
    <text evidence="3 8 18 20">Interacts with spike glycoprotein E1 (PubMed:33087569). Processing of the precursor of protein E3/E2 into E2 and E3 results in a heterodimer of the spike glycoproteins E2 and E1 (By similarity). Spike at virion surface are constituted of a trimer of E2-E1 heterodimers (By similarity). Interacts with 6K protein (By similarity). Interacts with host MXRA8; this interaction mediates virus entry (PubMed:29769725). The interaction involves 2 adjacent E2-E1 heterodimers (By similarity).</text>
</comment>
<comment type="subunit">
    <molecule>6K protein</molecule>
    <text evidence="3 8">Oligomer (By similarity). Interacts with spike glycoprotein E1. Interacts with spike glycoprotein E2 (By similarity).</text>
</comment>
<comment type="subcellular location">
    <molecule>Capsid protein</molecule>
    <subcellularLocation>
        <location evidence="3">Virion</location>
    </subcellularLocation>
    <subcellularLocation>
        <location evidence="17">Host cytoplasm</location>
    </subcellularLocation>
    <subcellularLocation>
        <location evidence="3">Host cell membrane</location>
    </subcellularLocation>
    <subcellularLocation>
        <location evidence="17">Host nucleus</location>
    </subcellularLocation>
    <text evidence="16 17">Shuttles between the cytoplasm and the nucleus.</text>
</comment>
<comment type="subcellular location">
    <molecule>Spike glycoprotein E2</molecule>
    <subcellularLocation>
        <location evidence="22">Virion membrane</location>
        <topology evidence="11">Single-pass type I membrane protein</topology>
    </subcellularLocation>
    <subcellularLocation>
        <location evidence="3">Host cell membrane</location>
        <topology evidence="14">Single-pass type I membrane protein</topology>
    </subcellularLocation>
</comment>
<comment type="subcellular location">
    <molecule>6K protein</molecule>
    <subcellularLocation>
        <location evidence="3">Host cell membrane</location>
        <topology evidence="11">Multi-pass membrane protein</topology>
    </subcellularLocation>
    <subcellularLocation>
        <location evidence="3">Virion membrane</location>
        <topology evidence="11">Multi-pass membrane protein</topology>
    </subcellularLocation>
    <subcellularLocation>
        <location evidence="3">Host Golgi apparatus</location>
    </subcellularLocation>
    <subcellularLocation>
        <location>Host Golgi apparatus</location>
        <location>Host trans-Golgi network</location>
    </subcellularLocation>
    <subcellularLocation>
        <location evidence="3">Host endoplasmic reticulum</location>
    </subcellularLocation>
</comment>
<comment type="subcellular location">
    <molecule>Spike glycoprotein E1</molecule>
    <subcellularLocation>
        <location evidence="22">Virion membrane</location>
        <topology evidence="11">Single-pass type I membrane protein</topology>
    </subcellularLocation>
    <subcellularLocation>
        <location evidence="3 14">Host cell membrane</location>
        <topology evidence="11">Single-pass type I membrane protein</topology>
    </subcellularLocation>
</comment>
<comment type="alternative products">
    <event type="ribosomal frameshifting"/>
    <isoform>
        <id>Q8JUX5-1</id>
        <name>Structural polyprotein</name>
        <sequence type="displayed"/>
    </isoform>
    <isoform>
        <id>P0DOK1-1</id>
        <name>Frameshifted structural polyprotein</name>
        <sequence type="external"/>
    </isoform>
</comment>
<comment type="domain">
    <molecule>Capsid protein</molecule>
    <text evidence="3 16">The N-terminus contains a nuclear localization signal and a CRM1-mediated nuclear export signal (PubMed:23984714). The C-terminus functions as a protease during translation to cleave itself from the translating structural polyprotein (By similarity).</text>
</comment>
<comment type="domain">
    <molecule>Isoform Structural polyprotein</molecule>
    <text evidence="2">As soon as the capsid protein has been autocleaved, an internal uncleaved signal peptide directs the remaining polyprotein to the endoplasmic reticulum.</text>
</comment>
<comment type="PTM">
    <molecule>Isoform Structural polyprotein</molecule>
    <text evidence="2">Specific enzymatic cleavages in vivo yield mature proteins. Capsid protein is auto-cleaved during polyprotein translation, unmasking a signal peptide at the N-terminus of the precursor of E3/E2 (By similarity). The remaining polyprotein is then targeted to the host endoplasmic reticulum, where host signal peptidase cleaves it into pE2, 6K and E1 proteins. pE2 is further processed to mature E3 and E2 by host furin in trans-Golgi vesicle (By similarity).</text>
</comment>
<comment type="PTM">
    <molecule>Spike glycoprotein E2</molecule>
    <text evidence="2">Palmitoylated via thioester bonds. These palmitoylations may induce disruption of the C-terminus transmembrane. This would result in the reorientation of E2 C-terminus from lumenal to cytoplasmic side.</text>
</comment>
<comment type="PTM">
    <molecule>Spike glycoprotein E1</molecule>
    <text evidence="2">N-glycosylated.</text>
</comment>
<comment type="PTM">
    <molecule>Spike glycoprotein E2</molecule>
    <text evidence="2">N-glycosylated.</text>
</comment>
<comment type="PTM">
    <molecule>Assembly protein E3</molecule>
    <text evidence="2">N-glycosylated.</text>
</comment>
<comment type="PTM">
    <molecule>6K protein</molecule>
    <text evidence="2">Palmitoylated via thioester bonds.</text>
</comment>
<comment type="miscellaneous">
    <text evidence="23">Belongs to the Old World alphaviruses that usually cause fever, maculopapular rash, arthralgia and myalgia.</text>
</comment>
<comment type="miscellaneous">
    <molecule>Isoform Structural polyprotein</molecule>
    <text evidence="10">Translated from a subgenomic RNA synthesized during togavirus replication.</text>
</comment>
<comment type="miscellaneous">
    <molecule>Isoform Structural polyprotein</molecule>
    <text>Produced by conventional translation.</text>
</comment>
<comment type="similarity">
    <text evidence="23">Belongs to the alphavirus structural polyprotein family.</text>
</comment>
<accession>Q8JUX5</accession>
<accession>Q80S29</accession>
<accession>Q8QR21</accession>
<name>POLS_CHIKS</name>
<reference key="1">
    <citation type="journal article" date="2002" name="J. Gen. Virol.">
        <title>Complete nucleotide sequence of chikungunya virus and evidence for an internal polyadenylation site.</title>
        <authorList>
            <person name="Khan A.H."/>
            <person name="Morita K."/>
            <person name="Parquet Md Mdel C."/>
            <person name="Hasebe F."/>
            <person name="Mathenge E.G."/>
            <person name="Igarashi A."/>
        </authorList>
    </citation>
    <scope>NUCLEOTIDE SEQUENCE [GENOMIC RNA]</scope>
</reference>
<reference key="2">
    <citation type="submission" date="2001-01" db="EMBL/GenBank/DDBJ databases">
        <title>Nucleotide sequence analyses of the 26S mRNAs of viruses of the genus Alphavirus.</title>
        <authorList>
            <person name="Kinney R.M."/>
            <person name="Pfeffer M."/>
        </authorList>
    </citation>
    <scope>NUCLEOTIDE SEQUENCE [GENOMIC RNA]</scope>
</reference>
<reference key="3">
    <citation type="submission" date="2002-10" db="EMBL/GenBank/DDBJ databases">
        <authorList>
            <person name="Logue C.H."/>
            <person name="Atkins G.J."/>
        </authorList>
    </citation>
    <scope>NUCLEOTIDE SEQUENCE [GENOMIC RNA]</scope>
    <source>
        <strain>Isolate Ross</strain>
    </source>
</reference>
<reference key="4">
    <citation type="submission" date="2011-02" db="EMBL/GenBank/DDBJ databases">
        <authorList>
            <person name="Logue C.H."/>
            <person name="Chamberlain J.F."/>
            <person name="Atkins G.J."/>
        </authorList>
    </citation>
    <scope>SEQUENCE REVISION TO 91-97; 576 AND 592</scope>
</reference>
<reference key="5">
    <citation type="journal article" date="1984" name="J. Virol.">
        <title>Structural proteins of Chikungunya virus.</title>
        <authorList>
            <person name="Simizu B."/>
            <person name="Yamamoto K."/>
            <person name="Hashimoto K."/>
            <person name="Ogata T."/>
        </authorList>
    </citation>
    <scope>SUBCELLULAR LOCATION (SPIKE GLYCOPROTEIN E2)</scope>
    <scope>SUBCELLULAR LOCATION (SPIKE GLYCOPROTEIN E1)</scope>
</reference>
<reference key="6">
    <citation type="journal article" date="2011" name="Virol. J.">
        <title>Functional processing and secretion of Chikungunya virus E1 and E2 glycoproteins in insect cells.</title>
        <authorList>
            <person name="Metz S.W."/>
            <person name="Geertsema C."/>
            <person name="Martina B.E."/>
            <person name="Andrade P."/>
            <person name="Heldens J.G."/>
            <person name="van Oers M.M."/>
            <person name="Goldbach R.W."/>
            <person name="Vlak J.M."/>
            <person name="Pijlman G.P."/>
        </authorList>
    </citation>
    <scope>SUBCELLULAR LOCATION (SPIKE GLYCOPROTEIN E1)</scope>
    <scope>SUBCELLULAR LOCATION (SPIKE GLYCOPROTEIN E2)</scope>
</reference>
<reference key="7">
    <citation type="journal article" date="2013" name="Virol. J.">
        <title>Chikungunya virus capsid protein contains nuclear import and export signals.</title>
        <authorList>
            <person name="Thomas S."/>
            <person name="Rai J."/>
            <person name="John L."/>
            <person name="Schaefer S."/>
            <person name="Puetzer B.M."/>
            <person name="Herchenroeder O."/>
        </authorList>
    </citation>
    <scope>SUBCELLULAR LOCATION (CAPSID PROTEIN)</scope>
    <scope>NUCLEAR LOCALIZATION SIGNAL</scope>
    <scope>NULEAR EXPORT SIGNAL</scope>
    <scope>INTERACTION WITH HOST KPNA4 (CAPSID PROTEIN)</scope>
</reference>
<reference key="8">
    <citation type="journal article" date="2017" name="Viruses">
        <title>Mutation of a conserved nuclear export sequence in Chikungunya virus capsid protein disrupts host cell nuclear import.</title>
        <authorList>
            <person name="Jacobs S.C."/>
            <person name="Taylor A."/>
            <person name="Herrero L.J."/>
            <person name="Mahalingam S."/>
            <person name="Fazakerley J.K."/>
        </authorList>
    </citation>
    <scope>NULEAR EXPORT SIGNAL</scope>
    <scope>SUBCELLULAR LOCATION (CAPSID PROTEIN)</scope>
    <scope>MUTAGENESIS OF LEU-51 AND MET-53</scope>
</reference>
<reference key="9">
    <citation type="journal article" date="2018" name="Nature">
        <title>Mxra8 is a receptor for multiple arthritogenic alphaviruses.</title>
        <authorList>
            <person name="Zhang R."/>
            <person name="Kim A.S."/>
            <person name="Fox J.M."/>
            <person name="Nair S."/>
            <person name="Basore K."/>
            <person name="Klimstra W.B."/>
            <person name="Rimkunas R."/>
            <person name="Fong R.H."/>
            <person name="Lin H."/>
            <person name="Poddar S."/>
            <person name="Crowe J.E. Jr."/>
            <person name="Doranz B.J."/>
            <person name="Fremont D.H."/>
            <person name="Diamond M.S."/>
        </authorList>
    </citation>
    <scope>FUNCTION (SPIKE GLYCOPROTEIN E2)</scope>
    <scope>INTERACTION WITH HOST MXRA8 (SPIKE GLYCOPROTEIN E2)</scope>
    <scope>FUNCTION (SPIKE GLYCOPROTEIN E1)</scope>
</reference>
<reference key="10">
    <citation type="journal article" date="2020" name="PLoS Pathog.">
        <title>Chikungunya virus antagonizes cGAS-STING mediated type-I interferon responses by degrading cGAS.</title>
        <authorList>
            <person name="Webb L.G."/>
            <person name="Veloz J."/>
            <person name="Pintado-Silva J."/>
            <person name="Zhu T."/>
            <person name="Rangel M.V."/>
            <person name="Mutetwa T."/>
            <person name="Zhang L."/>
            <person name="Bernal-Rubio D."/>
            <person name="Figueroa D."/>
            <person name="Carrau L."/>
            <person name="Fenutria R."/>
            <person name="Potla U."/>
            <person name="Reid S.P."/>
            <person name="Yount J.S."/>
            <person name="Stapleford K.A."/>
            <person name="Aguirre S."/>
            <person name="Fernandez-Sesma A."/>
        </authorList>
    </citation>
    <scope>FUNCTION (CAPSID PROTEIN)</scope>
</reference>
<reference key="11">
    <citation type="journal article" date="2012" name="Biochemistry">
        <title>NMR structure, localization, and vesicle fusion of Chikungunya virus fusion peptide.</title>
        <authorList>
            <person name="Mohanram H."/>
            <person name="Nip A."/>
            <person name="Domadia P.N."/>
            <person name="Bhunia A."/>
            <person name="Bhattacharjya S."/>
        </authorList>
    </citation>
    <scope>STRUCTURE BY NMR OF 893-910</scope>
    <scope>FUNCTION (SPIKE GLYCOPROTEIN E1)</scope>
</reference>
<reference evidence="25 26 27 28 29" key="12">
    <citation type="journal article" date="2020" name="Proc. Natl. Acad. Sci. U.S.A.">
        <title>Structural basis of Chikungunya virus inhibition by monoclonal antibodies.</title>
        <authorList>
            <person name="Zhou Q.F."/>
            <person name="Fox J.M."/>
            <person name="Earnest J.T."/>
            <person name="Ng T.S."/>
            <person name="Kim A.S."/>
            <person name="Fibriansah G."/>
            <person name="Kostyuchenko V.A."/>
            <person name="Shi J."/>
            <person name="Shu B."/>
            <person name="Diamond M.S."/>
            <person name="Lok S.M."/>
        </authorList>
    </citation>
    <scope>STRUCTURE BY ELECTRON MICROSCOPY (4.50 ANGSTROMS) OF 111-261; 330-748 AND 810-1248</scope>
    <scope>INTERACTION WITH SPIKE GLYCOPROTEIN E2 (SPIKE GLYCOPROTEIN E1)</scope>
    <scope>INTERACTION WITH SPIKE GLYCOPROTEIN E1 (SPIKE GLYCOPROTEIN E2)</scope>
</reference>
<reference key="13">
    <citation type="journal article" date="2022" name="Nat. Commun.">
        <title>Visualization of conformational changes and membrane remodeling leading to genome delivery by viral class-II fusion machinery.</title>
        <authorList>
            <person name="Mangala Prasad V."/>
            <person name="Blijleven J.S."/>
            <person name="Smit J.M."/>
            <person name="Lee K.K."/>
        </authorList>
    </citation>
    <scope>FUNCTION (SPIKE GLYCOPROTEIN E1)</scope>
</reference>
<proteinExistence type="evidence at protein level"/>